<protein>
    <recommendedName>
        <fullName evidence="1">UDP-3-O-acyl-N-acetylglucosamine deacetylase</fullName>
        <shortName evidence="1">UDP-3-O-acyl-GlcNAc deacetylase</shortName>
        <ecNumber evidence="1">3.5.1.108</ecNumber>
    </recommendedName>
    <alternativeName>
        <fullName evidence="1">UDP-3-O-[R-3-hydroxymyristoyl]-N-acetylglucosamine deacetylase</fullName>
    </alternativeName>
</protein>
<evidence type="ECO:0000255" key="1">
    <source>
        <dbReference type="HAMAP-Rule" id="MF_00388"/>
    </source>
</evidence>
<evidence type="ECO:0000305" key="2"/>
<keyword id="KW-0378">Hydrolase</keyword>
<keyword id="KW-0441">Lipid A biosynthesis</keyword>
<keyword id="KW-0444">Lipid biosynthesis</keyword>
<keyword id="KW-0443">Lipid metabolism</keyword>
<keyword id="KW-0479">Metal-binding</keyword>
<keyword id="KW-1185">Reference proteome</keyword>
<keyword id="KW-0862">Zinc</keyword>
<proteinExistence type="inferred from homology"/>
<gene>
    <name evidence="1" type="primary">lpxC</name>
    <name type="ordered locus">LA_2306</name>
</gene>
<dbReference type="EC" id="3.5.1.108" evidence="1"/>
<dbReference type="EMBL" id="AE010300">
    <property type="protein sequence ID" value="AAN49505.2"/>
    <property type="status" value="ALT_INIT"/>
    <property type="molecule type" value="Genomic_DNA"/>
</dbReference>
<dbReference type="RefSeq" id="NP_712487.2">
    <property type="nucleotide sequence ID" value="NC_004342.2"/>
</dbReference>
<dbReference type="SMR" id="Q8F3U4"/>
<dbReference type="FunCoup" id="Q8F3U4">
    <property type="interactions" value="362"/>
</dbReference>
<dbReference type="STRING" id="189518.LA_2306"/>
<dbReference type="PaxDb" id="189518-LA_2306"/>
<dbReference type="EnsemblBacteria" id="AAN49505">
    <property type="protein sequence ID" value="AAN49505"/>
    <property type="gene ID" value="LA_2306"/>
</dbReference>
<dbReference type="KEGG" id="lil:LA_2306"/>
<dbReference type="PATRIC" id="fig|189518.3.peg.2293"/>
<dbReference type="HOGENOM" id="CLU_046528_1_0_12"/>
<dbReference type="InParanoid" id="Q8F3U4"/>
<dbReference type="OrthoDB" id="9772788at2"/>
<dbReference type="UniPathway" id="UPA00359">
    <property type="reaction ID" value="UER00478"/>
</dbReference>
<dbReference type="Proteomes" id="UP000001408">
    <property type="component" value="Chromosome I"/>
</dbReference>
<dbReference type="GO" id="GO:0016020">
    <property type="term" value="C:membrane"/>
    <property type="evidence" value="ECO:0007669"/>
    <property type="project" value="GOC"/>
</dbReference>
<dbReference type="GO" id="GO:0046872">
    <property type="term" value="F:metal ion binding"/>
    <property type="evidence" value="ECO:0007669"/>
    <property type="project" value="UniProtKB-KW"/>
</dbReference>
<dbReference type="GO" id="GO:0103117">
    <property type="term" value="F:UDP-3-O-acyl-N-acetylglucosamine deacetylase activity"/>
    <property type="evidence" value="ECO:0007669"/>
    <property type="project" value="UniProtKB-UniRule"/>
</dbReference>
<dbReference type="GO" id="GO:0009245">
    <property type="term" value="P:lipid A biosynthetic process"/>
    <property type="evidence" value="ECO:0007669"/>
    <property type="project" value="UniProtKB-UniRule"/>
</dbReference>
<dbReference type="Gene3D" id="3.30.230.20">
    <property type="entry name" value="lpxc deacetylase, domain 1"/>
    <property type="match status" value="1"/>
</dbReference>
<dbReference type="Gene3D" id="3.30.1700.10">
    <property type="entry name" value="lpxc deacetylase, domain 2"/>
    <property type="match status" value="1"/>
</dbReference>
<dbReference type="HAMAP" id="MF_00388">
    <property type="entry name" value="LpxC"/>
    <property type="match status" value="1"/>
</dbReference>
<dbReference type="InterPro" id="IPR020568">
    <property type="entry name" value="Ribosomal_Su5_D2-typ_SF"/>
</dbReference>
<dbReference type="InterPro" id="IPR004463">
    <property type="entry name" value="UDP-acyl_GlcNac_deAcase"/>
</dbReference>
<dbReference type="InterPro" id="IPR011334">
    <property type="entry name" value="UDP-acyl_GlcNac_deAcase_C"/>
</dbReference>
<dbReference type="InterPro" id="IPR015870">
    <property type="entry name" value="UDP-acyl_N-AcGlcN_deAcase_N"/>
</dbReference>
<dbReference type="NCBIfam" id="TIGR00325">
    <property type="entry name" value="lpxC"/>
    <property type="match status" value="1"/>
</dbReference>
<dbReference type="PANTHER" id="PTHR33694">
    <property type="entry name" value="UDP-3-O-ACYL-N-ACETYLGLUCOSAMINE DEACETYLASE 1, MITOCHONDRIAL-RELATED"/>
    <property type="match status" value="1"/>
</dbReference>
<dbReference type="PANTHER" id="PTHR33694:SF1">
    <property type="entry name" value="UDP-3-O-ACYL-N-ACETYLGLUCOSAMINE DEACETYLASE 1, MITOCHONDRIAL-RELATED"/>
    <property type="match status" value="1"/>
</dbReference>
<dbReference type="Pfam" id="PF03331">
    <property type="entry name" value="LpxC"/>
    <property type="match status" value="1"/>
</dbReference>
<dbReference type="SUPFAM" id="SSF54211">
    <property type="entry name" value="Ribosomal protein S5 domain 2-like"/>
    <property type="match status" value="2"/>
</dbReference>
<accession>Q8F3U4</accession>
<feature type="chain" id="PRO_0000191938" description="UDP-3-O-acyl-N-acetylglucosamine deacetylase">
    <location>
        <begin position="1"/>
        <end position="301"/>
    </location>
</feature>
<feature type="active site" description="Proton donor" evidence="1">
    <location>
        <position position="264"/>
    </location>
</feature>
<feature type="binding site" evidence="1">
    <location>
        <position position="81"/>
    </location>
    <ligand>
        <name>Zn(2+)</name>
        <dbReference type="ChEBI" id="CHEBI:29105"/>
    </ligand>
</feature>
<feature type="binding site" evidence="1">
    <location>
        <position position="237"/>
    </location>
    <ligand>
        <name>Zn(2+)</name>
        <dbReference type="ChEBI" id="CHEBI:29105"/>
    </ligand>
</feature>
<feature type="binding site" evidence="1">
    <location>
        <position position="241"/>
    </location>
    <ligand>
        <name>Zn(2+)</name>
        <dbReference type="ChEBI" id="CHEBI:29105"/>
    </ligand>
</feature>
<comment type="function">
    <text evidence="1">Catalyzes the hydrolysis of UDP-3-O-myristoyl-N-acetylglucosamine to form UDP-3-O-myristoylglucosamine and acetate, the committed step in lipid A biosynthesis.</text>
</comment>
<comment type="catalytic activity">
    <reaction evidence="1">
        <text>a UDP-3-O-[(3R)-3-hydroxyacyl]-N-acetyl-alpha-D-glucosamine + H2O = a UDP-3-O-[(3R)-3-hydroxyacyl]-alpha-D-glucosamine + acetate</text>
        <dbReference type="Rhea" id="RHEA:67816"/>
        <dbReference type="ChEBI" id="CHEBI:15377"/>
        <dbReference type="ChEBI" id="CHEBI:30089"/>
        <dbReference type="ChEBI" id="CHEBI:137740"/>
        <dbReference type="ChEBI" id="CHEBI:173225"/>
        <dbReference type="EC" id="3.5.1.108"/>
    </reaction>
</comment>
<comment type="cofactor">
    <cofactor evidence="1">
        <name>Zn(2+)</name>
        <dbReference type="ChEBI" id="CHEBI:29105"/>
    </cofactor>
</comment>
<comment type="pathway">
    <text evidence="1">Glycolipid biosynthesis; lipid IV(A) biosynthesis; lipid IV(A) from (3R)-3-hydroxytetradecanoyl-[acyl-carrier-protein] and UDP-N-acetyl-alpha-D-glucosamine: step 2/6.</text>
</comment>
<comment type="similarity">
    <text evidence="1">Belongs to the LpxC family.</text>
</comment>
<comment type="sequence caution" evidence="2">
    <conflict type="erroneous initiation">
        <sequence resource="EMBL-CDS" id="AAN49505"/>
    </conflict>
    <text>Extended N-terminus.</text>
</comment>
<organism>
    <name type="scientific">Leptospira interrogans serogroup Icterohaemorrhagiae serovar Lai (strain 56601)</name>
    <dbReference type="NCBI Taxonomy" id="189518"/>
    <lineage>
        <taxon>Bacteria</taxon>
        <taxon>Pseudomonadati</taxon>
        <taxon>Spirochaetota</taxon>
        <taxon>Spirochaetia</taxon>
        <taxon>Leptospirales</taxon>
        <taxon>Leptospiraceae</taxon>
        <taxon>Leptospira</taxon>
    </lineage>
</organism>
<sequence length="301" mass="33088">MKEILYRRSIQDTVRIKGIGLHSGKEVNLTAHPAPSGTGIVFEYRKGLEKASISAELSNVVDTSNATTLGDGIHKIQTVEHLLAAVYALGLTDLILEIDAVEVPIMDGSSLPFLQALESAGIIEYPEIVEPIYIQSPLWVVDGDKYLVLLPSDELKVTYTIDFNHPLLKGQSITVSLDREKIKQEILPARTFGFLKDVEALQARGLAMGGSLDNAIVLTQDGYLNQQLRFENECVRHKILDLFGDISIAGRPIIGHYLASKAGHALDISMAKLVMSNVTGDEISKYKSRRIPLFKRKAVVV</sequence>
<name>LPXC_LEPIN</name>
<reference key="1">
    <citation type="journal article" date="2003" name="Nature">
        <title>Unique physiological and pathogenic features of Leptospira interrogans revealed by whole-genome sequencing.</title>
        <authorList>
            <person name="Ren S.-X."/>
            <person name="Fu G."/>
            <person name="Jiang X.-G."/>
            <person name="Zeng R."/>
            <person name="Miao Y.-G."/>
            <person name="Xu H."/>
            <person name="Zhang Y.-X."/>
            <person name="Xiong H."/>
            <person name="Lu G."/>
            <person name="Lu L.-F."/>
            <person name="Jiang H.-Q."/>
            <person name="Jia J."/>
            <person name="Tu Y.-F."/>
            <person name="Jiang J.-X."/>
            <person name="Gu W.-Y."/>
            <person name="Zhang Y.-Q."/>
            <person name="Cai Z."/>
            <person name="Sheng H.-H."/>
            <person name="Yin H.-F."/>
            <person name="Zhang Y."/>
            <person name="Zhu G.-F."/>
            <person name="Wan M."/>
            <person name="Huang H.-L."/>
            <person name="Qian Z."/>
            <person name="Wang S.-Y."/>
            <person name="Ma W."/>
            <person name="Yao Z.-J."/>
            <person name="Shen Y."/>
            <person name="Qiang B.-Q."/>
            <person name="Xia Q.-C."/>
            <person name="Guo X.-K."/>
            <person name="Danchin A."/>
            <person name="Saint Girons I."/>
            <person name="Somerville R.L."/>
            <person name="Wen Y.-M."/>
            <person name="Shi M.-H."/>
            <person name="Chen Z."/>
            <person name="Xu J.-G."/>
            <person name="Zhao G.-P."/>
        </authorList>
    </citation>
    <scope>NUCLEOTIDE SEQUENCE [LARGE SCALE GENOMIC DNA]</scope>
    <source>
        <strain>56601</strain>
    </source>
</reference>